<name>ILVD1_BORPE</name>
<reference key="1">
    <citation type="journal article" date="2003" name="Nat. Genet.">
        <title>Comparative analysis of the genome sequences of Bordetella pertussis, Bordetella parapertussis and Bordetella bronchiseptica.</title>
        <authorList>
            <person name="Parkhill J."/>
            <person name="Sebaihia M."/>
            <person name="Preston A."/>
            <person name="Murphy L.D."/>
            <person name="Thomson N.R."/>
            <person name="Harris D.E."/>
            <person name="Holden M.T.G."/>
            <person name="Churcher C.M."/>
            <person name="Bentley S.D."/>
            <person name="Mungall K.L."/>
            <person name="Cerdeno-Tarraga A.-M."/>
            <person name="Temple L."/>
            <person name="James K.D."/>
            <person name="Harris B."/>
            <person name="Quail M.A."/>
            <person name="Achtman M."/>
            <person name="Atkin R."/>
            <person name="Baker S."/>
            <person name="Basham D."/>
            <person name="Bason N."/>
            <person name="Cherevach I."/>
            <person name="Chillingworth T."/>
            <person name="Collins M."/>
            <person name="Cronin A."/>
            <person name="Davis P."/>
            <person name="Doggett J."/>
            <person name="Feltwell T."/>
            <person name="Goble A."/>
            <person name="Hamlin N."/>
            <person name="Hauser H."/>
            <person name="Holroyd S."/>
            <person name="Jagels K."/>
            <person name="Leather S."/>
            <person name="Moule S."/>
            <person name="Norberczak H."/>
            <person name="O'Neil S."/>
            <person name="Ormond D."/>
            <person name="Price C."/>
            <person name="Rabbinowitsch E."/>
            <person name="Rutter S."/>
            <person name="Sanders M."/>
            <person name="Saunders D."/>
            <person name="Seeger K."/>
            <person name="Sharp S."/>
            <person name="Simmonds M."/>
            <person name="Skelton J."/>
            <person name="Squares R."/>
            <person name="Squares S."/>
            <person name="Stevens K."/>
            <person name="Unwin L."/>
            <person name="Whitehead S."/>
            <person name="Barrell B.G."/>
            <person name="Maskell D.J."/>
        </authorList>
    </citation>
    <scope>NUCLEOTIDE SEQUENCE [LARGE SCALE GENOMIC DNA]</scope>
    <source>
        <strain>Tohama I / ATCC BAA-589 / NCTC 13251</strain>
    </source>
</reference>
<feature type="chain" id="PRO_0000103439" description="Dihydroxy-acid dehydratase 1">
    <location>
        <begin position="1"/>
        <end position="619"/>
    </location>
</feature>
<feature type="active site" description="Proton acceptor" evidence="1">
    <location>
        <position position="520"/>
    </location>
</feature>
<feature type="binding site" evidence="1">
    <location>
        <position position="81"/>
    </location>
    <ligand>
        <name>Mg(2+)</name>
        <dbReference type="ChEBI" id="CHEBI:18420"/>
    </ligand>
</feature>
<feature type="binding site" evidence="1">
    <location>
        <position position="122"/>
    </location>
    <ligand>
        <name>[2Fe-2S] cluster</name>
        <dbReference type="ChEBI" id="CHEBI:190135"/>
    </ligand>
</feature>
<feature type="binding site" evidence="1">
    <location>
        <position position="123"/>
    </location>
    <ligand>
        <name>Mg(2+)</name>
        <dbReference type="ChEBI" id="CHEBI:18420"/>
    </ligand>
</feature>
<feature type="binding site" description="via carbamate group" evidence="1">
    <location>
        <position position="124"/>
    </location>
    <ligand>
        <name>Mg(2+)</name>
        <dbReference type="ChEBI" id="CHEBI:18420"/>
    </ligand>
</feature>
<feature type="binding site" evidence="1">
    <location>
        <position position="198"/>
    </location>
    <ligand>
        <name>[2Fe-2S] cluster</name>
        <dbReference type="ChEBI" id="CHEBI:190135"/>
    </ligand>
</feature>
<feature type="binding site" evidence="1">
    <location>
        <position position="494"/>
    </location>
    <ligand>
        <name>Mg(2+)</name>
        <dbReference type="ChEBI" id="CHEBI:18420"/>
    </ligand>
</feature>
<feature type="modified residue" description="N6-carboxylysine" evidence="1">
    <location>
        <position position="124"/>
    </location>
</feature>
<comment type="function">
    <text evidence="1">Functions in the biosynthesis of branched-chain amino acids. Catalyzes the dehydration of (2R,3R)-2,3-dihydroxy-3-methylpentanoate (2,3-dihydroxy-3-methylvalerate) into 2-oxo-3-methylpentanoate (2-oxo-3-methylvalerate) and of (2R)-2,3-dihydroxy-3-methylbutanoate (2,3-dihydroxyisovalerate) into 2-oxo-3-methylbutanoate (2-oxoisovalerate), the penultimate precursor to L-isoleucine and L-valine, respectively.</text>
</comment>
<comment type="catalytic activity">
    <reaction evidence="1">
        <text>(2R)-2,3-dihydroxy-3-methylbutanoate = 3-methyl-2-oxobutanoate + H2O</text>
        <dbReference type="Rhea" id="RHEA:24809"/>
        <dbReference type="ChEBI" id="CHEBI:11851"/>
        <dbReference type="ChEBI" id="CHEBI:15377"/>
        <dbReference type="ChEBI" id="CHEBI:49072"/>
        <dbReference type="EC" id="4.2.1.9"/>
    </reaction>
    <physiologicalReaction direction="left-to-right" evidence="1">
        <dbReference type="Rhea" id="RHEA:24810"/>
    </physiologicalReaction>
</comment>
<comment type="catalytic activity">
    <reaction evidence="1">
        <text>(2R,3R)-2,3-dihydroxy-3-methylpentanoate = (S)-3-methyl-2-oxopentanoate + H2O</text>
        <dbReference type="Rhea" id="RHEA:27694"/>
        <dbReference type="ChEBI" id="CHEBI:15377"/>
        <dbReference type="ChEBI" id="CHEBI:35146"/>
        <dbReference type="ChEBI" id="CHEBI:49258"/>
        <dbReference type="EC" id="4.2.1.9"/>
    </reaction>
    <physiologicalReaction direction="left-to-right" evidence="1">
        <dbReference type="Rhea" id="RHEA:27695"/>
    </physiologicalReaction>
</comment>
<comment type="cofactor">
    <cofactor evidence="1">
        <name>[2Fe-2S] cluster</name>
        <dbReference type="ChEBI" id="CHEBI:190135"/>
    </cofactor>
    <text evidence="1">Binds 1 [2Fe-2S] cluster per subunit. This cluster acts as a Lewis acid cofactor.</text>
</comment>
<comment type="cofactor">
    <cofactor evidence="1">
        <name>Mg(2+)</name>
        <dbReference type="ChEBI" id="CHEBI:18420"/>
    </cofactor>
</comment>
<comment type="pathway">
    <text evidence="1">Amino-acid biosynthesis; L-isoleucine biosynthesis; L-isoleucine from 2-oxobutanoate: step 3/4.</text>
</comment>
<comment type="pathway">
    <text evidence="1">Amino-acid biosynthesis; L-valine biosynthesis; L-valine from pyruvate: step 3/4.</text>
</comment>
<comment type="subunit">
    <text evidence="1">Homodimer.</text>
</comment>
<comment type="similarity">
    <text evidence="1">Belongs to the IlvD/Edd family.</text>
</comment>
<keyword id="KW-0001">2Fe-2S</keyword>
<keyword id="KW-0028">Amino-acid biosynthesis</keyword>
<keyword id="KW-0100">Branched-chain amino acid biosynthesis</keyword>
<keyword id="KW-0408">Iron</keyword>
<keyword id="KW-0411">Iron-sulfur</keyword>
<keyword id="KW-0456">Lyase</keyword>
<keyword id="KW-0460">Magnesium</keyword>
<keyword id="KW-0479">Metal-binding</keyword>
<keyword id="KW-1185">Reference proteome</keyword>
<organism>
    <name type="scientific">Bordetella pertussis (strain Tohama I / ATCC BAA-589 / NCTC 13251)</name>
    <dbReference type="NCBI Taxonomy" id="257313"/>
    <lineage>
        <taxon>Bacteria</taxon>
        <taxon>Pseudomonadati</taxon>
        <taxon>Pseudomonadota</taxon>
        <taxon>Betaproteobacteria</taxon>
        <taxon>Burkholderiales</taxon>
        <taxon>Alcaligenaceae</taxon>
        <taxon>Bordetella</taxon>
    </lineage>
</organism>
<proteinExistence type="inferred from homology"/>
<dbReference type="EC" id="4.2.1.9" evidence="1"/>
<dbReference type="EMBL" id="BX640411">
    <property type="protein sequence ID" value="CAE40668.1"/>
    <property type="molecule type" value="Genomic_DNA"/>
</dbReference>
<dbReference type="RefSeq" id="NP_879169.1">
    <property type="nucleotide sequence ID" value="NC_002929.2"/>
</dbReference>
<dbReference type="SMR" id="Q7W069"/>
<dbReference type="STRING" id="257313.BP0289"/>
<dbReference type="PaxDb" id="257313-BP0289"/>
<dbReference type="KEGG" id="bpe:BP0289"/>
<dbReference type="PATRIC" id="fig|257313.5.peg.312"/>
<dbReference type="eggNOG" id="COG0129">
    <property type="taxonomic scope" value="Bacteria"/>
</dbReference>
<dbReference type="HOGENOM" id="CLU_014271_4_2_4"/>
<dbReference type="UniPathway" id="UPA00047">
    <property type="reaction ID" value="UER00057"/>
</dbReference>
<dbReference type="UniPathway" id="UPA00049">
    <property type="reaction ID" value="UER00061"/>
</dbReference>
<dbReference type="Proteomes" id="UP000002676">
    <property type="component" value="Chromosome"/>
</dbReference>
<dbReference type="GO" id="GO:0005829">
    <property type="term" value="C:cytosol"/>
    <property type="evidence" value="ECO:0007669"/>
    <property type="project" value="TreeGrafter"/>
</dbReference>
<dbReference type="GO" id="GO:0051537">
    <property type="term" value="F:2 iron, 2 sulfur cluster binding"/>
    <property type="evidence" value="ECO:0007669"/>
    <property type="project" value="UniProtKB-UniRule"/>
</dbReference>
<dbReference type="GO" id="GO:0004160">
    <property type="term" value="F:dihydroxy-acid dehydratase activity"/>
    <property type="evidence" value="ECO:0007669"/>
    <property type="project" value="UniProtKB-UniRule"/>
</dbReference>
<dbReference type="GO" id="GO:0000287">
    <property type="term" value="F:magnesium ion binding"/>
    <property type="evidence" value="ECO:0007669"/>
    <property type="project" value="UniProtKB-UniRule"/>
</dbReference>
<dbReference type="GO" id="GO:0009097">
    <property type="term" value="P:isoleucine biosynthetic process"/>
    <property type="evidence" value="ECO:0007669"/>
    <property type="project" value="UniProtKB-UniRule"/>
</dbReference>
<dbReference type="GO" id="GO:0009099">
    <property type="term" value="P:L-valine biosynthetic process"/>
    <property type="evidence" value="ECO:0007669"/>
    <property type="project" value="UniProtKB-UniRule"/>
</dbReference>
<dbReference type="FunFam" id="3.50.30.80:FF:000001">
    <property type="entry name" value="Dihydroxy-acid dehydratase"/>
    <property type="match status" value="1"/>
</dbReference>
<dbReference type="Gene3D" id="3.50.30.80">
    <property type="entry name" value="IlvD/EDD C-terminal domain-like"/>
    <property type="match status" value="1"/>
</dbReference>
<dbReference type="HAMAP" id="MF_00012">
    <property type="entry name" value="IlvD"/>
    <property type="match status" value="1"/>
</dbReference>
<dbReference type="InterPro" id="IPR042096">
    <property type="entry name" value="Dihydro-acid_dehy_C"/>
</dbReference>
<dbReference type="InterPro" id="IPR004404">
    <property type="entry name" value="DihydroxyA_deHydtase"/>
</dbReference>
<dbReference type="InterPro" id="IPR020558">
    <property type="entry name" value="DiOHA_6PGluconate_deHydtase_CS"/>
</dbReference>
<dbReference type="InterPro" id="IPR056740">
    <property type="entry name" value="ILV_EDD_C"/>
</dbReference>
<dbReference type="InterPro" id="IPR000581">
    <property type="entry name" value="ILV_EDD_N"/>
</dbReference>
<dbReference type="InterPro" id="IPR037237">
    <property type="entry name" value="IlvD/EDD_N"/>
</dbReference>
<dbReference type="NCBIfam" id="TIGR00110">
    <property type="entry name" value="ilvD"/>
    <property type="match status" value="1"/>
</dbReference>
<dbReference type="NCBIfam" id="NF009103">
    <property type="entry name" value="PRK12448.1"/>
    <property type="match status" value="1"/>
</dbReference>
<dbReference type="PANTHER" id="PTHR43661">
    <property type="entry name" value="D-XYLONATE DEHYDRATASE"/>
    <property type="match status" value="1"/>
</dbReference>
<dbReference type="PANTHER" id="PTHR43661:SF3">
    <property type="entry name" value="D-XYLONATE DEHYDRATASE YAGF-RELATED"/>
    <property type="match status" value="1"/>
</dbReference>
<dbReference type="Pfam" id="PF24877">
    <property type="entry name" value="ILV_EDD_C"/>
    <property type="match status" value="1"/>
</dbReference>
<dbReference type="Pfam" id="PF00920">
    <property type="entry name" value="ILVD_EDD_N"/>
    <property type="match status" value="1"/>
</dbReference>
<dbReference type="SUPFAM" id="SSF143975">
    <property type="entry name" value="IlvD/EDD N-terminal domain-like"/>
    <property type="match status" value="1"/>
</dbReference>
<dbReference type="SUPFAM" id="SSF52016">
    <property type="entry name" value="LeuD/IlvD-like"/>
    <property type="match status" value="1"/>
</dbReference>
<dbReference type="PROSITE" id="PS00886">
    <property type="entry name" value="ILVD_EDD_1"/>
    <property type="match status" value="1"/>
</dbReference>
<dbReference type="PROSITE" id="PS00887">
    <property type="entry name" value="ILVD_EDD_2"/>
    <property type="match status" value="1"/>
</dbReference>
<accession>Q7W069</accession>
<gene>
    <name evidence="1" type="primary">ilvD1</name>
    <name type="ordered locus">BP0289</name>
</gene>
<evidence type="ECO:0000255" key="1">
    <source>
        <dbReference type="HAMAP-Rule" id="MF_00012"/>
    </source>
</evidence>
<sequence length="619" mass="65592">MPHYRSRTSTHGRNMAGARALWRATGMKDGDFGKPIIAVVNSFTQFVPGHVHLRDLGALVAREIEAAGGVAKEFNTIAVDDGIAMGHGGMLYSLPSRELIADSVEYMVNAHCADAMVCISNCDKITPGMLMAAMRLNIPVVFVSGGPMEAGKITSPVDGKVIAKLDLVDAMIKAADPNVSDAEAEEVERSACPTCGSCSGMFTANSMNCLTEAIGLALPGNGTIVATHAWRKGLFEQAGRLVVELCRRYYEQDDASVLPRSIATKSAFENAMTLDVAMGGSTNTVLHLLAAAQEAGVDFTMSDIDRISRRVPCLCKAAPATDKYHIEDVHRAGGILGILGELGRADLLDLSCGNVHSGTLGEAINQWDINGGAGEAAQKFFRAAPGGIPTTVAFSQDATFLTLDMDRQTGCIRDKAHAYSQDGGLAVLYGNLAEKGCIVKTAGVDESQWVFTGRARVFESQEDAVEGILGDRVQAGDVVIIRYEGPKGGPGMQEMLYPTSYLKSKGLGKTCALFTDGRFSGGSSGLVIGHASPEAAEGGTIGLVEEGDTIEIDIPNRRIHLAVGDTVLAERRAAMQARGEQAWQPVDRERVVSQALRAYAALATSADRGAVRDLSQLKR</sequence>
<protein>
    <recommendedName>
        <fullName evidence="1">Dihydroxy-acid dehydratase 1</fullName>
        <shortName evidence="1">DAD 1</shortName>
        <ecNumber evidence="1">4.2.1.9</ecNumber>
    </recommendedName>
</protein>